<dbReference type="EMBL" id="CP000377">
    <property type="protein sequence ID" value="ABF65170.1"/>
    <property type="molecule type" value="Genomic_DNA"/>
</dbReference>
<dbReference type="RefSeq" id="WP_011539757.1">
    <property type="nucleotide sequence ID" value="NC_008044.1"/>
</dbReference>
<dbReference type="SMR" id="Q1GDU6"/>
<dbReference type="STRING" id="292414.TM1040_2438"/>
<dbReference type="KEGG" id="sit:TM1040_2438"/>
<dbReference type="eggNOG" id="COG1660">
    <property type="taxonomic scope" value="Bacteria"/>
</dbReference>
<dbReference type="HOGENOM" id="CLU_059558_0_0_5"/>
<dbReference type="OrthoDB" id="9784461at2"/>
<dbReference type="Proteomes" id="UP000000636">
    <property type="component" value="Chromosome"/>
</dbReference>
<dbReference type="GO" id="GO:0005524">
    <property type="term" value="F:ATP binding"/>
    <property type="evidence" value="ECO:0007669"/>
    <property type="project" value="UniProtKB-UniRule"/>
</dbReference>
<dbReference type="GO" id="GO:0005525">
    <property type="term" value="F:GTP binding"/>
    <property type="evidence" value="ECO:0007669"/>
    <property type="project" value="UniProtKB-UniRule"/>
</dbReference>
<dbReference type="Gene3D" id="3.40.50.300">
    <property type="entry name" value="P-loop containing nucleotide triphosphate hydrolases"/>
    <property type="match status" value="1"/>
</dbReference>
<dbReference type="HAMAP" id="MF_00636">
    <property type="entry name" value="RapZ_like"/>
    <property type="match status" value="1"/>
</dbReference>
<dbReference type="InterPro" id="IPR027417">
    <property type="entry name" value="P-loop_NTPase"/>
</dbReference>
<dbReference type="InterPro" id="IPR005337">
    <property type="entry name" value="RapZ-like"/>
</dbReference>
<dbReference type="InterPro" id="IPR053930">
    <property type="entry name" value="RapZ-like_N"/>
</dbReference>
<dbReference type="InterPro" id="IPR053931">
    <property type="entry name" value="RapZ_C"/>
</dbReference>
<dbReference type="NCBIfam" id="NF003828">
    <property type="entry name" value="PRK05416.1"/>
    <property type="match status" value="1"/>
</dbReference>
<dbReference type="PANTHER" id="PTHR30448">
    <property type="entry name" value="RNASE ADAPTER PROTEIN RAPZ"/>
    <property type="match status" value="1"/>
</dbReference>
<dbReference type="PANTHER" id="PTHR30448:SF0">
    <property type="entry name" value="RNASE ADAPTER PROTEIN RAPZ"/>
    <property type="match status" value="1"/>
</dbReference>
<dbReference type="Pfam" id="PF22740">
    <property type="entry name" value="PapZ_C"/>
    <property type="match status" value="1"/>
</dbReference>
<dbReference type="Pfam" id="PF03668">
    <property type="entry name" value="RapZ-like_N"/>
    <property type="match status" value="1"/>
</dbReference>
<dbReference type="PIRSF" id="PIRSF005052">
    <property type="entry name" value="P-loopkin"/>
    <property type="match status" value="1"/>
</dbReference>
<dbReference type="SUPFAM" id="SSF52540">
    <property type="entry name" value="P-loop containing nucleoside triphosphate hydrolases"/>
    <property type="match status" value="1"/>
</dbReference>
<reference key="1">
    <citation type="submission" date="2006-05" db="EMBL/GenBank/DDBJ databases">
        <title>Complete sequence of chromosome of Silicibacter sp. TM1040.</title>
        <authorList>
            <consortium name="US DOE Joint Genome Institute"/>
            <person name="Copeland A."/>
            <person name="Lucas S."/>
            <person name="Lapidus A."/>
            <person name="Barry K."/>
            <person name="Detter J.C."/>
            <person name="Glavina del Rio T."/>
            <person name="Hammon N."/>
            <person name="Israni S."/>
            <person name="Dalin E."/>
            <person name="Tice H."/>
            <person name="Pitluck S."/>
            <person name="Brettin T."/>
            <person name="Bruce D."/>
            <person name="Han C."/>
            <person name="Tapia R."/>
            <person name="Goodwin L."/>
            <person name="Thompson L.S."/>
            <person name="Gilna P."/>
            <person name="Schmutz J."/>
            <person name="Larimer F."/>
            <person name="Land M."/>
            <person name="Hauser L."/>
            <person name="Kyrpides N."/>
            <person name="Kim E."/>
            <person name="Belas R."/>
            <person name="Moran M.A."/>
            <person name="Buchan A."/>
            <person name="Gonzalez J.M."/>
            <person name="Schell M.A."/>
            <person name="Sun F."/>
            <person name="Richardson P."/>
        </authorList>
    </citation>
    <scope>NUCLEOTIDE SEQUENCE [LARGE SCALE GENOMIC DNA]</scope>
    <source>
        <strain>TM1040</strain>
    </source>
</reference>
<evidence type="ECO:0000255" key="1">
    <source>
        <dbReference type="HAMAP-Rule" id="MF_00636"/>
    </source>
</evidence>
<proteinExistence type="inferred from homology"/>
<accession>Q1GDU6</accession>
<comment type="function">
    <text evidence="1">Displays ATPase and GTPase activities.</text>
</comment>
<comment type="similarity">
    <text evidence="1">Belongs to the RapZ-like family.</text>
</comment>
<name>Y2438_RUEST</name>
<protein>
    <recommendedName>
        <fullName evidence="1">Nucleotide-binding protein TM1040_2438</fullName>
    </recommendedName>
</protein>
<sequence length="300" mass="33443">MTPKQSPNSETGAVTEPPLVLVTGPSGAGRTTAINVLEDLDFEAIDNLPLRLVPALVAAGGADRALVLGLDPRNRDFSTEAMVDMIDMLKARRGLKTTVLYLDADAEILLRRFSETRRRHPLSPAESPELGVSRELDLMQPVKERSDVVIDTSDLNVHQLRAEVERLFAPSGRRLAVSLHSFSYKRGIPRNVDMVFDCRFLSNPYWEPALRVHDGRDQEVQDYVMSDARFQGFFDRVLDLTLSLLPAYREEGKSHFSIAFGCTGGQHRSVTLAETLAKALAREGQQVSIRHRELPGQQLK</sequence>
<keyword id="KW-0067">ATP-binding</keyword>
<keyword id="KW-0342">GTP-binding</keyword>
<keyword id="KW-0547">Nucleotide-binding</keyword>
<keyword id="KW-1185">Reference proteome</keyword>
<organism>
    <name type="scientific">Ruegeria sp. (strain TM1040)</name>
    <name type="common">Silicibacter sp.</name>
    <dbReference type="NCBI Taxonomy" id="292414"/>
    <lineage>
        <taxon>Bacteria</taxon>
        <taxon>Pseudomonadati</taxon>
        <taxon>Pseudomonadota</taxon>
        <taxon>Alphaproteobacteria</taxon>
        <taxon>Rhodobacterales</taxon>
        <taxon>Roseobacteraceae</taxon>
        <taxon>Ruegeria</taxon>
    </lineage>
</organism>
<gene>
    <name type="ordered locus">TM1040_2438</name>
</gene>
<feature type="chain" id="PRO_0000259000" description="Nucleotide-binding protein TM1040_2438">
    <location>
        <begin position="1"/>
        <end position="300"/>
    </location>
</feature>
<feature type="binding site" evidence="1">
    <location>
        <begin position="24"/>
        <end position="31"/>
    </location>
    <ligand>
        <name>ATP</name>
        <dbReference type="ChEBI" id="CHEBI:30616"/>
    </ligand>
</feature>
<feature type="binding site" evidence="1">
    <location>
        <begin position="71"/>
        <end position="74"/>
    </location>
    <ligand>
        <name>GTP</name>
        <dbReference type="ChEBI" id="CHEBI:37565"/>
    </ligand>
</feature>